<evidence type="ECO:0000255" key="1">
    <source>
        <dbReference type="HAMAP-Rule" id="MF_00731"/>
    </source>
</evidence>
<proteinExistence type="inferred from homology"/>
<dbReference type="EC" id="6.2.1.26" evidence="1"/>
<dbReference type="EMBL" id="CP000255">
    <property type="protein sequence ID" value="ABD22067.1"/>
    <property type="molecule type" value="Genomic_DNA"/>
</dbReference>
<dbReference type="RefSeq" id="WP_000348360.1">
    <property type="nucleotide sequence ID" value="NZ_CP027476.1"/>
</dbReference>
<dbReference type="SMR" id="Q2FFU9"/>
<dbReference type="KEGG" id="saa:SAUSA300_1737"/>
<dbReference type="HOGENOM" id="CLU_000022_59_0_9"/>
<dbReference type="OMA" id="KGKWFKT"/>
<dbReference type="UniPathway" id="UPA00079"/>
<dbReference type="UniPathway" id="UPA01057">
    <property type="reaction ID" value="UER00166"/>
</dbReference>
<dbReference type="Proteomes" id="UP000001939">
    <property type="component" value="Chromosome"/>
</dbReference>
<dbReference type="GO" id="GO:0005524">
    <property type="term" value="F:ATP binding"/>
    <property type="evidence" value="ECO:0007669"/>
    <property type="project" value="UniProtKB-KW"/>
</dbReference>
<dbReference type="GO" id="GO:0008756">
    <property type="term" value="F:o-succinylbenzoate-CoA ligase activity"/>
    <property type="evidence" value="ECO:0007669"/>
    <property type="project" value="UniProtKB-UniRule"/>
</dbReference>
<dbReference type="GO" id="GO:0009234">
    <property type="term" value="P:menaquinone biosynthetic process"/>
    <property type="evidence" value="ECO:0007669"/>
    <property type="project" value="UniProtKB-UniRule"/>
</dbReference>
<dbReference type="CDD" id="cd05912">
    <property type="entry name" value="OSB_CoA_lg"/>
    <property type="match status" value="1"/>
</dbReference>
<dbReference type="Gene3D" id="3.30.300.30">
    <property type="match status" value="1"/>
</dbReference>
<dbReference type="Gene3D" id="3.40.50.12780">
    <property type="entry name" value="N-terminal domain of ligase-like"/>
    <property type="match status" value="1"/>
</dbReference>
<dbReference type="HAMAP" id="MF_00731">
    <property type="entry name" value="MenE"/>
    <property type="match status" value="1"/>
</dbReference>
<dbReference type="InterPro" id="IPR025110">
    <property type="entry name" value="AMP-bd_C"/>
</dbReference>
<dbReference type="InterPro" id="IPR045851">
    <property type="entry name" value="AMP-bd_C_sf"/>
</dbReference>
<dbReference type="InterPro" id="IPR000873">
    <property type="entry name" value="AMP-dep_synth/lig_dom"/>
</dbReference>
<dbReference type="InterPro" id="IPR042099">
    <property type="entry name" value="ANL_N_sf"/>
</dbReference>
<dbReference type="InterPro" id="IPR050237">
    <property type="entry name" value="ATP-dep_AMP-bd_enzyme"/>
</dbReference>
<dbReference type="InterPro" id="IPR010192">
    <property type="entry name" value="MenE"/>
</dbReference>
<dbReference type="NCBIfam" id="TIGR01923">
    <property type="entry name" value="menE"/>
    <property type="match status" value="1"/>
</dbReference>
<dbReference type="PANTHER" id="PTHR43767">
    <property type="entry name" value="LONG-CHAIN-FATTY-ACID--COA LIGASE"/>
    <property type="match status" value="1"/>
</dbReference>
<dbReference type="PANTHER" id="PTHR43767:SF1">
    <property type="entry name" value="NONRIBOSOMAL PEPTIDE SYNTHASE PES1 (EUROFUNG)-RELATED"/>
    <property type="match status" value="1"/>
</dbReference>
<dbReference type="Pfam" id="PF00501">
    <property type="entry name" value="AMP-binding"/>
    <property type="match status" value="1"/>
</dbReference>
<dbReference type="Pfam" id="PF13193">
    <property type="entry name" value="AMP-binding_C"/>
    <property type="match status" value="1"/>
</dbReference>
<dbReference type="SUPFAM" id="SSF56801">
    <property type="entry name" value="Acetyl-CoA synthetase-like"/>
    <property type="match status" value="1"/>
</dbReference>
<gene>
    <name evidence="1" type="primary">menE</name>
    <name type="ordered locus">SAUSA300_1737</name>
</gene>
<keyword id="KW-0067">ATP-binding</keyword>
<keyword id="KW-0436">Ligase</keyword>
<keyword id="KW-0474">Menaquinone biosynthesis</keyword>
<keyword id="KW-0547">Nucleotide-binding</keyword>
<protein>
    <recommendedName>
        <fullName evidence="1">2-succinylbenzoate--CoA ligase</fullName>
        <ecNumber evidence="1">6.2.1.26</ecNumber>
    </recommendedName>
    <alternativeName>
        <fullName evidence="1">o-succinylbenzoyl-CoA synthetase</fullName>
        <shortName evidence="1">OSB-CoA synthetase</shortName>
    </alternativeName>
</protein>
<reference key="1">
    <citation type="journal article" date="2006" name="Lancet">
        <title>Complete genome sequence of USA300, an epidemic clone of community-acquired meticillin-resistant Staphylococcus aureus.</title>
        <authorList>
            <person name="Diep B.A."/>
            <person name="Gill S.R."/>
            <person name="Chang R.F."/>
            <person name="Phan T.H."/>
            <person name="Chen J.H."/>
            <person name="Davidson M.G."/>
            <person name="Lin F."/>
            <person name="Lin J."/>
            <person name="Carleton H.A."/>
            <person name="Mongodin E.F."/>
            <person name="Sensabaugh G.F."/>
            <person name="Perdreau-Remington F."/>
        </authorList>
    </citation>
    <scope>NUCLEOTIDE SEQUENCE [LARGE SCALE GENOMIC DNA]</scope>
    <source>
        <strain>USA300</strain>
    </source>
</reference>
<accession>Q2FFU9</accession>
<sequence>MDFWLYKQAQQNGHHIAITDGQESYTYQNLYCEASLLAKRLKAYQQSRVGLYIDNSIQSIILIHACWLANIEIAMINTRLTPNEMTNQMKSIDVQLIFCTLPLELRGFQIVSLDDIEFAGRDITTNSLLDNTMGIQYETSNETVVPKESPSNILNTSFNLDDIASIMFTSGTTGPQKAVPQTFRNHYASAIGCKESLGFDRDTNWLSVLPIYHISGLSVLLRAVIEGFTVRIVDKFNAEQILTMIKNERITHISLVPQTLNWLMQQGLHEPYNLQKILLGGAKLSATMIETALQYNLPIYNSFGMTETCSQFLTATPEMLHARPDTVGMPSANVDVKIKNPNKEGHGELMIKGANVMNVYLYPTDLTGTFENGYFNTGDIAEIDHEGYVMIYDRRKDLIISGGENIYPYQIETVAKQFPGISDAVCVGHPDDTWGQVPKLYFVSESDISKAQLIAYLSQHLAKYKVPKHFEKVDTLPYTSTGKLQRNKLYRG</sequence>
<comment type="function">
    <text evidence="1">Converts 2-succinylbenzoate (OSB) to 2-succinylbenzoyl-CoA (OSB-CoA).</text>
</comment>
<comment type="catalytic activity">
    <reaction evidence="1">
        <text>2-succinylbenzoate + ATP + CoA = 2-succinylbenzoyl-CoA + AMP + diphosphate</text>
        <dbReference type="Rhea" id="RHEA:17009"/>
        <dbReference type="ChEBI" id="CHEBI:18325"/>
        <dbReference type="ChEBI" id="CHEBI:30616"/>
        <dbReference type="ChEBI" id="CHEBI:33019"/>
        <dbReference type="ChEBI" id="CHEBI:57287"/>
        <dbReference type="ChEBI" id="CHEBI:57364"/>
        <dbReference type="ChEBI" id="CHEBI:456215"/>
        <dbReference type="EC" id="6.2.1.26"/>
    </reaction>
</comment>
<comment type="pathway">
    <text evidence="1">Quinol/quinone metabolism; 1,4-dihydroxy-2-naphthoate biosynthesis; 1,4-dihydroxy-2-naphthoate from chorismate: step 5/7.</text>
</comment>
<comment type="pathway">
    <text evidence="1">Quinol/quinone metabolism; menaquinone biosynthesis.</text>
</comment>
<comment type="similarity">
    <text evidence="1">Belongs to the ATP-dependent AMP-binding enzyme family. MenE subfamily.</text>
</comment>
<organism>
    <name type="scientific">Staphylococcus aureus (strain USA300)</name>
    <dbReference type="NCBI Taxonomy" id="367830"/>
    <lineage>
        <taxon>Bacteria</taxon>
        <taxon>Bacillati</taxon>
        <taxon>Bacillota</taxon>
        <taxon>Bacilli</taxon>
        <taxon>Bacillales</taxon>
        <taxon>Staphylococcaceae</taxon>
        <taxon>Staphylococcus</taxon>
    </lineage>
</organism>
<name>MENE_STAA3</name>
<feature type="chain" id="PRO_1000045966" description="2-succinylbenzoate--CoA ligase">
    <location>
        <begin position="1"/>
        <end position="492"/>
    </location>
</feature>